<evidence type="ECO:0000250" key="1"/>
<evidence type="ECO:0000255" key="2"/>
<evidence type="ECO:0000305" key="3"/>
<evidence type="ECO:0000312" key="4">
    <source>
        <dbReference type="FlyBase" id="FBgn0031284"/>
    </source>
</evidence>
<name>PGAP2_DROME</name>
<proteinExistence type="evidence at transcript level"/>
<protein>
    <recommendedName>
        <fullName>Post-GPI attachment to proteins factor 2</fullName>
    </recommendedName>
</protein>
<organism>
    <name type="scientific">Drosophila melanogaster</name>
    <name type="common">Fruit fly</name>
    <dbReference type="NCBI Taxonomy" id="7227"/>
    <lineage>
        <taxon>Eukaryota</taxon>
        <taxon>Metazoa</taxon>
        <taxon>Ecdysozoa</taxon>
        <taxon>Arthropoda</taxon>
        <taxon>Hexapoda</taxon>
        <taxon>Insecta</taxon>
        <taxon>Pterygota</taxon>
        <taxon>Neoptera</taxon>
        <taxon>Endopterygota</taxon>
        <taxon>Diptera</taxon>
        <taxon>Brachycera</taxon>
        <taxon>Muscomorpha</taxon>
        <taxon>Ephydroidea</taxon>
        <taxon>Drosophilidae</taxon>
        <taxon>Drosophila</taxon>
        <taxon>Sophophora</taxon>
    </lineage>
</organism>
<accession>Q9VPT7</accession>
<gene>
    <name evidence="4" type="primary">PGAP2</name>
    <name evidence="4" type="ORF">CG3876</name>
</gene>
<feature type="chain" id="PRO_0000326102" description="Post-GPI attachment to proteins factor 2">
    <location>
        <begin position="1"/>
        <end position="255"/>
    </location>
</feature>
<feature type="transmembrane region" description="Helical" evidence="2">
    <location>
        <begin position="23"/>
        <end position="43"/>
    </location>
</feature>
<feature type="transmembrane region" description="Helical" evidence="2">
    <location>
        <begin position="111"/>
        <end position="131"/>
    </location>
</feature>
<feature type="transmembrane region" description="Helical" evidence="2">
    <location>
        <begin position="143"/>
        <end position="163"/>
    </location>
</feature>
<feature type="transmembrane region" description="Helical" evidence="2">
    <location>
        <begin position="185"/>
        <end position="205"/>
    </location>
</feature>
<feature type="transmembrane region" description="Helical" evidence="2">
    <location>
        <begin position="209"/>
        <end position="229"/>
    </location>
</feature>
<dbReference type="EMBL" id="AE014134">
    <property type="protein sequence ID" value="AAF51454.2"/>
    <property type="molecule type" value="Genomic_DNA"/>
</dbReference>
<dbReference type="EMBL" id="AY121646">
    <property type="protein sequence ID" value="AAM51973.1"/>
    <property type="molecule type" value="mRNA"/>
</dbReference>
<dbReference type="RefSeq" id="NP_608548.1">
    <property type="nucleotide sequence ID" value="NM_134704.5"/>
</dbReference>
<dbReference type="BioGRID" id="59512">
    <property type="interactions" value="1"/>
</dbReference>
<dbReference type="FunCoup" id="Q9VPT7">
    <property type="interactions" value="644"/>
</dbReference>
<dbReference type="IntAct" id="Q9VPT7">
    <property type="interactions" value="2"/>
</dbReference>
<dbReference type="STRING" id="7227.FBpp0077703"/>
<dbReference type="PaxDb" id="7227-FBpp0077703"/>
<dbReference type="DNASU" id="33258"/>
<dbReference type="EnsemblMetazoa" id="FBtr0078039">
    <property type="protein sequence ID" value="FBpp0077703"/>
    <property type="gene ID" value="FBgn0031284"/>
</dbReference>
<dbReference type="GeneID" id="33258"/>
<dbReference type="KEGG" id="dme:Dmel_CG3876"/>
<dbReference type="UCSC" id="CG3876-RA">
    <property type="organism name" value="d. melanogaster"/>
</dbReference>
<dbReference type="AGR" id="FB:FBgn0031284"/>
<dbReference type="CTD" id="27315"/>
<dbReference type="FlyBase" id="FBgn0031284">
    <property type="gene designation" value="PGAP2"/>
</dbReference>
<dbReference type="VEuPathDB" id="VectorBase:FBgn0031284"/>
<dbReference type="eggNOG" id="KOG3979">
    <property type="taxonomic scope" value="Eukaryota"/>
</dbReference>
<dbReference type="GeneTree" id="ENSGT00510000047299"/>
<dbReference type="HOGENOM" id="CLU_061191_1_0_1"/>
<dbReference type="InParanoid" id="Q9VPT7"/>
<dbReference type="OMA" id="MRHNARC"/>
<dbReference type="OrthoDB" id="68581at2759"/>
<dbReference type="PhylomeDB" id="Q9VPT7"/>
<dbReference type="BioGRID-ORCS" id="33258">
    <property type="hits" value="0 hits in 1 CRISPR screen"/>
</dbReference>
<dbReference type="GenomeRNAi" id="33258"/>
<dbReference type="PRO" id="PR:Q9VPT7"/>
<dbReference type="Proteomes" id="UP000000803">
    <property type="component" value="Chromosome 2L"/>
</dbReference>
<dbReference type="Bgee" id="FBgn0031284">
    <property type="expression patterns" value="Expressed in T neuron T5c (Drosophila) in embryonic/larval optic lobe (Drosophila) and 66 other cell types or tissues"/>
</dbReference>
<dbReference type="ExpressionAtlas" id="Q9VPT7">
    <property type="expression patterns" value="baseline and differential"/>
</dbReference>
<dbReference type="GO" id="GO:0005789">
    <property type="term" value="C:endoplasmic reticulum membrane"/>
    <property type="evidence" value="ECO:0000250"/>
    <property type="project" value="UniProtKB"/>
</dbReference>
<dbReference type="GO" id="GO:0000139">
    <property type="term" value="C:Golgi membrane"/>
    <property type="evidence" value="ECO:0000250"/>
    <property type="project" value="UniProtKB"/>
</dbReference>
<dbReference type="GO" id="GO:0006506">
    <property type="term" value="P:GPI anchor biosynthetic process"/>
    <property type="evidence" value="ECO:0000250"/>
    <property type="project" value="UniProtKB"/>
</dbReference>
<dbReference type="InterPro" id="IPR019402">
    <property type="entry name" value="Frag1/DRAM/Sfk1"/>
</dbReference>
<dbReference type="InterPro" id="IPR039545">
    <property type="entry name" value="PGAP2"/>
</dbReference>
<dbReference type="PANTHER" id="PTHR12892">
    <property type="entry name" value="FGF RECEPTOR ACTIVATING PROTEIN 1"/>
    <property type="match status" value="1"/>
</dbReference>
<dbReference type="PANTHER" id="PTHR12892:SF11">
    <property type="entry name" value="POST-GPI ATTACHMENT TO PROTEINS FACTOR 2"/>
    <property type="match status" value="1"/>
</dbReference>
<dbReference type="Pfam" id="PF10277">
    <property type="entry name" value="Frag1"/>
    <property type="match status" value="1"/>
</dbReference>
<keyword id="KW-0256">Endoplasmic reticulum</keyword>
<keyword id="KW-0333">Golgi apparatus</keyword>
<keyword id="KW-0337">GPI-anchor biosynthesis</keyword>
<keyword id="KW-0472">Membrane</keyword>
<keyword id="KW-1185">Reference proteome</keyword>
<keyword id="KW-0812">Transmembrane</keyword>
<keyword id="KW-1133">Transmembrane helix</keyword>
<reference key="1">
    <citation type="journal article" date="2000" name="Science">
        <title>The genome sequence of Drosophila melanogaster.</title>
        <authorList>
            <person name="Adams M.D."/>
            <person name="Celniker S.E."/>
            <person name="Holt R.A."/>
            <person name="Evans C.A."/>
            <person name="Gocayne J.D."/>
            <person name="Amanatides P.G."/>
            <person name="Scherer S.E."/>
            <person name="Li P.W."/>
            <person name="Hoskins R.A."/>
            <person name="Galle R.F."/>
            <person name="George R.A."/>
            <person name="Lewis S.E."/>
            <person name="Richards S."/>
            <person name="Ashburner M."/>
            <person name="Henderson S.N."/>
            <person name="Sutton G.G."/>
            <person name="Wortman J.R."/>
            <person name="Yandell M.D."/>
            <person name="Zhang Q."/>
            <person name="Chen L.X."/>
            <person name="Brandon R.C."/>
            <person name="Rogers Y.-H.C."/>
            <person name="Blazej R.G."/>
            <person name="Champe M."/>
            <person name="Pfeiffer B.D."/>
            <person name="Wan K.H."/>
            <person name="Doyle C."/>
            <person name="Baxter E.G."/>
            <person name="Helt G."/>
            <person name="Nelson C.R."/>
            <person name="Miklos G.L.G."/>
            <person name="Abril J.F."/>
            <person name="Agbayani A."/>
            <person name="An H.-J."/>
            <person name="Andrews-Pfannkoch C."/>
            <person name="Baldwin D."/>
            <person name="Ballew R.M."/>
            <person name="Basu A."/>
            <person name="Baxendale J."/>
            <person name="Bayraktaroglu L."/>
            <person name="Beasley E.M."/>
            <person name="Beeson K.Y."/>
            <person name="Benos P.V."/>
            <person name="Berman B.P."/>
            <person name="Bhandari D."/>
            <person name="Bolshakov S."/>
            <person name="Borkova D."/>
            <person name="Botchan M.R."/>
            <person name="Bouck J."/>
            <person name="Brokstein P."/>
            <person name="Brottier P."/>
            <person name="Burtis K.C."/>
            <person name="Busam D.A."/>
            <person name="Butler H."/>
            <person name="Cadieu E."/>
            <person name="Center A."/>
            <person name="Chandra I."/>
            <person name="Cherry J.M."/>
            <person name="Cawley S."/>
            <person name="Dahlke C."/>
            <person name="Davenport L.B."/>
            <person name="Davies P."/>
            <person name="de Pablos B."/>
            <person name="Delcher A."/>
            <person name="Deng Z."/>
            <person name="Mays A.D."/>
            <person name="Dew I."/>
            <person name="Dietz S.M."/>
            <person name="Dodson K."/>
            <person name="Doup L.E."/>
            <person name="Downes M."/>
            <person name="Dugan-Rocha S."/>
            <person name="Dunkov B.C."/>
            <person name="Dunn P."/>
            <person name="Durbin K.J."/>
            <person name="Evangelista C.C."/>
            <person name="Ferraz C."/>
            <person name="Ferriera S."/>
            <person name="Fleischmann W."/>
            <person name="Fosler C."/>
            <person name="Gabrielian A.E."/>
            <person name="Garg N.S."/>
            <person name="Gelbart W.M."/>
            <person name="Glasser K."/>
            <person name="Glodek A."/>
            <person name="Gong F."/>
            <person name="Gorrell J.H."/>
            <person name="Gu Z."/>
            <person name="Guan P."/>
            <person name="Harris M."/>
            <person name="Harris N.L."/>
            <person name="Harvey D.A."/>
            <person name="Heiman T.J."/>
            <person name="Hernandez J.R."/>
            <person name="Houck J."/>
            <person name="Hostin D."/>
            <person name="Houston K.A."/>
            <person name="Howland T.J."/>
            <person name="Wei M.-H."/>
            <person name="Ibegwam C."/>
            <person name="Jalali M."/>
            <person name="Kalush F."/>
            <person name="Karpen G.H."/>
            <person name="Ke Z."/>
            <person name="Kennison J.A."/>
            <person name="Ketchum K.A."/>
            <person name="Kimmel B.E."/>
            <person name="Kodira C.D."/>
            <person name="Kraft C.L."/>
            <person name="Kravitz S."/>
            <person name="Kulp D."/>
            <person name="Lai Z."/>
            <person name="Lasko P."/>
            <person name="Lei Y."/>
            <person name="Levitsky A.A."/>
            <person name="Li J.H."/>
            <person name="Li Z."/>
            <person name="Liang Y."/>
            <person name="Lin X."/>
            <person name="Liu X."/>
            <person name="Mattei B."/>
            <person name="McIntosh T.C."/>
            <person name="McLeod M.P."/>
            <person name="McPherson D."/>
            <person name="Merkulov G."/>
            <person name="Milshina N.V."/>
            <person name="Mobarry C."/>
            <person name="Morris J."/>
            <person name="Moshrefi A."/>
            <person name="Mount S.M."/>
            <person name="Moy M."/>
            <person name="Murphy B."/>
            <person name="Murphy L."/>
            <person name="Muzny D.M."/>
            <person name="Nelson D.L."/>
            <person name="Nelson D.R."/>
            <person name="Nelson K.A."/>
            <person name="Nixon K."/>
            <person name="Nusskern D.R."/>
            <person name="Pacleb J.M."/>
            <person name="Palazzolo M."/>
            <person name="Pittman G.S."/>
            <person name="Pan S."/>
            <person name="Pollard J."/>
            <person name="Puri V."/>
            <person name="Reese M.G."/>
            <person name="Reinert K."/>
            <person name="Remington K."/>
            <person name="Saunders R.D.C."/>
            <person name="Scheeler F."/>
            <person name="Shen H."/>
            <person name="Shue B.C."/>
            <person name="Siden-Kiamos I."/>
            <person name="Simpson M."/>
            <person name="Skupski M.P."/>
            <person name="Smith T.J."/>
            <person name="Spier E."/>
            <person name="Spradling A.C."/>
            <person name="Stapleton M."/>
            <person name="Strong R."/>
            <person name="Sun E."/>
            <person name="Svirskas R."/>
            <person name="Tector C."/>
            <person name="Turner R."/>
            <person name="Venter E."/>
            <person name="Wang A.H."/>
            <person name="Wang X."/>
            <person name="Wang Z.-Y."/>
            <person name="Wassarman D.A."/>
            <person name="Weinstock G.M."/>
            <person name="Weissenbach J."/>
            <person name="Williams S.M."/>
            <person name="Woodage T."/>
            <person name="Worley K.C."/>
            <person name="Wu D."/>
            <person name="Yang S."/>
            <person name="Yao Q.A."/>
            <person name="Ye J."/>
            <person name="Yeh R.-F."/>
            <person name="Zaveri J.S."/>
            <person name="Zhan M."/>
            <person name="Zhang G."/>
            <person name="Zhao Q."/>
            <person name="Zheng L."/>
            <person name="Zheng X.H."/>
            <person name="Zhong F.N."/>
            <person name="Zhong W."/>
            <person name="Zhou X."/>
            <person name="Zhu S.C."/>
            <person name="Zhu X."/>
            <person name="Smith H.O."/>
            <person name="Gibbs R.A."/>
            <person name="Myers E.W."/>
            <person name="Rubin G.M."/>
            <person name="Venter J.C."/>
        </authorList>
    </citation>
    <scope>NUCLEOTIDE SEQUENCE [LARGE SCALE GENOMIC DNA]</scope>
    <source>
        <strain>Berkeley</strain>
    </source>
</reference>
<reference key="2">
    <citation type="journal article" date="2002" name="Genome Biol.">
        <title>Annotation of the Drosophila melanogaster euchromatic genome: a systematic review.</title>
        <authorList>
            <person name="Misra S."/>
            <person name="Crosby M.A."/>
            <person name="Mungall C.J."/>
            <person name="Matthews B.B."/>
            <person name="Campbell K.S."/>
            <person name="Hradecky P."/>
            <person name="Huang Y."/>
            <person name="Kaminker J.S."/>
            <person name="Millburn G.H."/>
            <person name="Prochnik S.E."/>
            <person name="Smith C.D."/>
            <person name="Tupy J.L."/>
            <person name="Whitfield E.J."/>
            <person name="Bayraktaroglu L."/>
            <person name="Berman B.P."/>
            <person name="Bettencourt B.R."/>
            <person name="Celniker S.E."/>
            <person name="de Grey A.D.N.J."/>
            <person name="Drysdale R.A."/>
            <person name="Harris N.L."/>
            <person name="Richter J."/>
            <person name="Russo S."/>
            <person name="Schroeder A.J."/>
            <person name="Shu S.Q."/>
            <person name="Stapleton M."/>
            <person name="Yamada C."/>
            <person name="Ashburner M."/>
            <person name="Gelbart W.M."/>
            <person name="Rubin G.M."/>
            <person name="Lewis S.E."/>
        </authorList>
    </citation>
    <scope>GENOME REANNOTATION</scope>
    <source>
        <strain>Berkeley</strain>
    </source>
</reference>
<reference key="3">
    <citation type="journal article" date="2002" name="Genome Biol.">
        <title>A Drosophila full-length cDNA resource.</title>
        <authorList>
            <person name="Stapleton M."/>
            <person name="Carlson J.W."/>
            <person name="Brokstein P."/>
            <person name="Yu C."/>
            <person name="Champe M."/>
            <person name="George R.A."/>
            <person name="Guarin H."/>
            <person name="Kronmiller B."/>
            <person name="Pacleb J.M."/>
            <person name="Park S."/>
            <person name="Wan K.H."/>
            <person name="Rubin G.M."/>
            <person name="Celniker S.E."/>
        </authorList>
    </citation>
    <scope>NUCLEOTIDE SEQUENCE [LARGE SCALE MRNA]</scope>
    <source>
        <strain>Berkeley</strain>
        <tissue>Embryo</tissue>
    </source>
</reference>
<sequence>MLPTYERFSDPKSVLFRLPFARLALVALSLPLGGFFFCVIWSLTFDFVRSTYTHCDVTNYLPSVSAAIGNYEPQKTVWRLAIFLHLPLRLAVAKIYLEHYREHIRRSRRLLGILACFLNVVEDLALFCLSFWTSADHYETHRNAFVVFIACSECYMLVSYLLNRNIQKTVLLPHEEKSLRYKRNLFLVNVIAFGLAGYCFVRHNSHCEAGVYTFFALFEYIVVLTNMGFHMTSYWDFYALNVVCDAKHGLYLSQS</sequence>
<comment type="function">
    <text evidence="1">Involved in the lipid remodeling steps of GPI-anchor maturation. Required for stable expression of GPI-anchored proteins at the cell surface (By similarity).</text>
</comment>
<comment type="subcellular location">
    <subcellularLocation>
        <location evidence="1">Golgi apparatus membrane</location>
        <topology evidence="1">Multi-pass membrane protein</topology>
    </subcellularLocation>
    <subcellularLocation>
        <location evidence="1">Endoplasmic reticulum membrane</location>
        <topology evidence="1">Multi-pass membrane protein</topology>
    </subcellularLocation>
</comment>
<comment type="similarity">
    <text evidence="3">Belongs to the PGAP2 family.</text>
</comment>